<protein>
    <recommendedName>
        <fullName evidence="1">RNA pyrophosphohydrolase</fullName>
        <ecNumber evidence="1">3.6.1.-</ecNumber>
    </recommendedName>
    <alternativeName>
        <fullName evidence="1">(Di)nucleoside polyphosphate hydrolase</fullName>
    </alternativeName>
</protein>
<proteinExistence type="inferred from homology"/>
<comment type="function">
    <text evidence="1">Accelerates the degradation of transcripts by removing pyrophosphate from the 5'-end of triphosphorylated RNA, leading to a more labile monophosphorylated state that can stimulate subsequent ribonuclease cleavage.</text>
</comment>
<comment type="cofactor">
    <cofactor evidence="1">
        <name>a divalent metal cation</name>
        <dbReference type="ChEBI" id="CHEBI:60240"/>
    </cofactor>
</comment>
<comment type="similarity">
    <text evidence="1">Belongs to the Nudix hydrolase family. RppH subfamily.</text>
</comment>
<dbReference type="EC" id="3.6.1.-" evidence="1"/>
<dbReference type="EMBL" id="AP008981">
    <property type="protein sequence ID" value="BAG40415.1"/>
    <property type="molecule type" value="Genomic_DNA"/>
</dbReference>
<dbReference type="RefSeq" id="WP_011944565.1">
    <property type="nucleotide sequence ID" value="NC_010793.1"/>
</dbReference>
<dbReference type="SMR" id="B3CSR8"/>
<dbReference type="KEGG" id="ott:OTT_0957"/>
<dbReference type="HOGENOM" id="CLU_087195_3_0_5"/>
<dbReference type="OrthoDB" id="9816040at2"/>
<dbReference type="Proteomes" id="UP000001033">
    <property type="component" value="Chromosome"/>
</dbReference>
<dbReference type="GO" id="GO:0034432">
    <property type="term" value="F:bis(5'-adenosyl)-pentaphosphatase activity"/>
    <property type="evidence" value="ECO:0007669"/>
    <property type="project" value="TreeGrafter"/>
</dbReference>
<dbReference type="GO" id="GO:0008893">
    <property type="term" value="F:guanosine-3',5'-bis(diphosphate) 3'-diphosphatase activity"/>
    <property type="evidence" value="ECO:0007669"/>
    <property type="project" value="TreeGrafter"/>
</dbReference>
<dbReference type="GO" id="GO:0006753">
    <property type="term" value="P:nucleoside phosphate metabolic process"/>
    <property type="evidence" value="ECO:0007669"/>
    <property type="project" value="TreeGrafter"/>
</dbReference>
<dbReference type="GO" id="GO:0019693">
    <property type="term" value="P:ribose phosphate metabolic process"/>
    <property type="evidence" value="ECO:0007669"/>
    <property type="project" value="TreeGrafter"/>
</dbReference>
<dbReference type="CDD" id="cd03671">
    <property type="entry name" value="NUDIX_Ap4A_hydrolase_plant_like"/>
    <property type="match status" value="1"/>
</dbReference>
<dbReference type="Gene3D" id="3.90.79.10">
    <property type="entry name" value="Nucleoside Triphosphate Pyrophosphohydrolase"/>
    <property type="match status" value="1"/>
</dbReference>
<dbReference type="HAMAP" id="MF_00298">
    <property type="entry name" value="Nudix_RppH"/>
    <property type="match status" value="1"/>
</dbReference>
<dbReference type="InterPro" id="IPR015797">
    <property type="entry name" value="NUDIX_hydrolase-like_dom_sf"/>
</dbReference>
<dbReference type="InterPro" id="IPR020084">
    <property type="entry name" value="NUDIX_hydrolase_CS"/>
</dbReference>
<dbReference type="InterPro" id="IPR000086">
    <property type="entry name" value="NUDIX_hydrolase_dom"/>
</dbReference>
<dbReference type="InterPro" id="IPR022927">
    <property type="entry name" value="RppH"/>
</dbReference>
<dbReference type="NCBIfam" id="NF001936">
    <property type="entry name" value="PRK00714.1-3"/>
    <property type="match status" value="1"/>
</dbReference>
<dbReference type="NCBIfam" id="NF001938">
    <property type="entry name" value="PRK00714.1-5"/>
    <property type="match status" value="1"/>
</dbReference>
<dbReference type="PANTHER" id="PTHR11839:SF22">
    <property type="entry name" value="NUDIX HYDROLASE 26, CHLOROPLASTIC"/>
    <property type="match status" value="1"/>
</dbReference>
<dbReference type="PANTHER" id="PTHR11839">
    <property type="entry name" value="UDP/ADP-SUGAR PYROPHOSPHATASE"/>
    <property type="match status" value="1"/>
</dbReference>
<dbReference type="Pfam" id="PF00293">
    <property type="entry name" value="NUDIX"/>
    <property type="match status" value="1"/>
</dbReference>
<dbReference type="SUPFAM" id="SSF55811">
    <property type="entry name" value="Nudix"/>
    <property type="match status" value="1"/>
</dbReference>
<dbReference type="PROSITE" id="PS51462">
    <property type="entry name" value="NUDIX"/>
    <property type="match status" value="1"/>
</dbReference>
<dbReference type="PROSITE" id="PS00893">
    <property type="entry name" value="NUDIX_BOX"/>
    <property type="match status" value="1"/>
</dbReference>
<gene>
    <name evidence="1" type="primary">rppH</name>
    <name evidence="1" type="synonym">nudH</name>
    <name type="ordered locus">OTT_0957</name>
</gene>
<feature type="chain" id="PRO_1000115286" description="RNA pyrophosphohydrolase">
    <location>
        <begin position="1"/>
        <end position="161"/>
    </location>
</feature>
<feature type="domain" description="Nudix hydrolase" evidence="1">
    <location>
        <begin position="12"/>
        <end position="154"/>
    </location>
</feature>
<feature type="short sequence motif" description="Nudix box">
    <location>
        <begin position="46"/>
        <end position="67"/>
    </location>
</feature>
<accession>B3CSR8</accession>
<name>RPPH_ORITI</name>
<keyword id="KW-0378">Hydrolase</keyword>
<evidence type="ECO:0000255" key="1">
    <source>
        <dbReference type="HAMAP-Rule" id="MF_00298"/>
    </source>
</evidence>
<organism>
    <name type="scientific">Orientia tsutsugamushi (strain Ikeda)</name>
    <name type="common">Rickettsia tsutsugamushi</name>
    <dbReference type="NCBI Taxonomy" id="334380"/>
    <lineage>
        <taxon>Bacteria</taxon>
        <taxon>Pseudomonadati</taxon>
        <taxon>Pseudomonadota</taxon>
        <taxon>Alphaproteobacteria</taxon>
        <taxon>Rickettsiales</taxon>
        <taxon>Rickettsiaceae</taxon>
        <taxon>Rickettsieae</taxon>
        <taxon>Orientia</taxon>
    </lineage>
</organism>
<reference key="1">
    <citation type="journal article" date="2008" name="DNA Res.">
        <title>The whole-genome sequencing of the obligate intracellular bacterium Orientia tsutsugamushi revealed massive gene amplification during reductive genome evolution.</title>
        <authorList>
            <person name="Nakayama K."/>
            <person name="Yamashita A."/>
            <person name="Kurokawa K."/>
            <person name="Morimoto T."/>
            <person name="Ogawa M."/>
            <person name="Fukuhara M."/>
            <person name="Urakami H."/>
            <person name="Ohnishi M."/>
            <person name="Uchiyama I."/>
            <person name="Ogura Y."/>
            <person name="Ooka T."/>
            <person name="Oshima K."/>
            <person name="Tamura A."/>
            <person name="Hattori M."/>
            <person name="Hayashi T."/>
        </authorList>
    </citation>
    <scope>NUCLEOTIDE SEQUENCE [LARGE SCALE GENOMIC DNA]</scope>
    <source>
        <strain>Ikeda</strain>
    </source>
</reference>
<sequence length="161" mass="19255">MDDKIKNYNNLPYRIGVGMVIINQKKEIFTGQRIDSARQYWQMPQGGIILGETYSKAVLREMKEEIGCNKAIIMAESRNWYSYHIPKFLVHKLWNSNFKGQKQKWFLIKFLGKDEDININTIYPEFSQWKWMNSNQLINNALPFKRKLYKAVINEFHIFLL</sequence>